<dbReference type="EC" id="3.4.22.-" evidence="3"/>
<dbReference type="EMBL" id="AK075795">
    <property type="protein sequence ID" value="BAC35964.1"/>
    <property type="molecule type" value="mRNA"/>
</dbReference>
<dbReference type="EMBL" id="AK078309">
    <property type="protein sequence ID" value="BAC37214.1"/>
    <property type="status" value="ALT_SEQ"/>
    <property type="molecule type" value="mRNA"/>
</dbReference>
<dbReference type="EMBL" id="BC005503">
    <property type="protein sequence ID" value="AAH05503.1"/>
    <property type="molecule type" value="mRNA"/>
</dbReference>
<dbReference type="CCDS" id="CCDS22284.1"/>
<dbReference type="RefSeq" id="NP_619609.1">
    <property type="nucleotide sequence ID" value="NM_138668.2"/>
</dbReference>
<dbReference type="RefSeq" id="XP_017168107.1">
    <property type="nucleotide sequence ID" value="XM_017312618.3"/>
</dbReference>
<dbReference type="PDB" id="3OQC">
    <property type="method" value="X-ray"/>
    <property type="resolution" value="2.60 A"/>
    <property type="chains" value="A/B=1-461"/>
</dbReference>
<dbReference type="PDBsum" id="3OQC"/>
<dbReference type="SMR" id="Q99K23"/>
<dbReference type="BioGRID" id="228658">
    <property type="interactions" value="1"/>
</dbReference>
<dbReference type="FunCoup" id="Q99K23">
    <property type="interactions" value="2716"/>
</dbReference>
<dbReference type="STRING" id="10090.ENSMUSP00000034051"/>
<dbReference type="MEROPS" id="C78.002"/>
<dbReference type="iPTMnet" id="Q99K23"/>
<dbReference type="PhosphoSitePlus" id="Q99K23"/>
<dbReference type="SwissPalm" id="Q99K23"/>
<dbReference type="PaxDb" id="10090-ENSMUSP00000034051"/>
<dbReference type="PeptideAtlas" id="Q99K23"/>
<dbReference type="ProteomicsDB" id="298470"/>
<dbReference type="Pumba" id="Q99K23"/>
<dbReference type="Antibodypedia" id="45789">
    <property type="antibodies" value="99 antibodies from 19 providers"/>
</dbReference>
<dbReference type="DNASU" id="192169"/>
<dbReference type="Ensembl" id="ENSMUST00000034051.7">
    <property type="protein sequence ID" value="ENSMUSP00000034051.7"/>
    <property type="gene ID" value="ENSMUSG00000031634.14"/>
</dbReference>
<dbReference type="GeneID" id="192169"/>
<dbReference type="KEGG" id="mmu:192169"/>
<dbReference type="UCSC" id="uc009lpp.2">
    <property type="organism name" value="mouse"/>
</dbReference>
<dbReference type="AGR" id="MGI:1913679"/>
<dbReference type="CTD" id="55325"/>
<dbReference type="MGI" id="MGI:1913679">
    <property type="gene designation" value="Ufsp2"/>
</dbReference>
<dbReference type="VEuPathDB" id="HostDB:ENSMUSG00000031634"/>
<dbReference type="eggNOG" id="KOG2433">
    <property type="taxonomic scope" value="Eukaryota"/>
</dbReference>
<dbReference type="GeneTree" id="ENSGT00940000157115"/>
<dbReference type="HOGENOM" id="CLU_021066_1_1_1"/>
<dbReference type="InParanoid" id="Q99K23"/>
<dbReference type="OMA" id="MDILFRV"/>
<dbReference type="OrthoDB" id="417506at2759"/>
<dbReference type="PhylomeDB" id="Q99K23"/>
<dbReference type="TreeFam" id="TF325896"/>
<dbReference type="BioGRID-ORCS" id="192169">
    <property type="hits" value="13 hits in 78 CRISPR screens"/>
</dbReference>
<dbReference type="ChiTaRS" id="Ufsp2">
    <property type="organism name" value="mouse"/>
</dbReference>
<dbReference type="EvolutionaryTrace" id="Q99K23"/>
<dbReference type="PRO" id="PR:Q99K23"/>
<dbReference type="Proteomes" id="UP000000589">
    <property type="component" value="Chromosome 8"/>
</dbReference>
<dbReference type="RNAct" id="Q99K23">
    <property type="molecule type" value="protein"/>
</dbReference>
<dbReference type="Bgee" id="ENSMUSG00000031634">
    <property type="expression patterns" value="Expressed in seminal vesicle and 257 other cell types or tissues"/>
</dbReference>
<dbReference type="ExpressionAtlas" id="Q99K23">
    <property type="expression patterns" value="baseline and differential"/>
</dbReference>
<dbReference type="GO" id="GO:0005737">
    <property type="term" value="C:cytoplasm"/>
    <property type="evidence" value="ECO:0000314"/>
    <property type="project" value="UniProtKB"/>
</dbReference>
<dbReference type="GO" id="GO:0005783">
    <property type="term" value="C:endoplasmic reticulum"/>
    <property type="evidence" value="ECO:0000314"/>
    <property type="project" value="UniProtKB"/>
</dbReference>
<dbReference type="GO" id="GO:0005634">
    <property type="term" value="C:nucleus"/>
    <property type="evidence" value="ECO:0000314"/>
    <property type="project" value="UniProtKB"/>
</dbReference>
<dbReference type="GO" id="GO:0071567">
    <property type="term" value="F:deUFMylase activity"/>
    <property type="evidence" value="ECO:0000314"/>
    <property type="project" value="UniProtKB"/>
</dbReference>
<dbReference type="GO" id="GO:1903051">
    <property type="term" value="P:negative regulation of proteolysis involved in protein catabolic process"/>
    <property type="evidence" value="ECO:0007669"/>
    <property type="project" value="Ensembl"/>
</dbReference>
<dbReference type="GO" id="GO:0006508">
    <property type="term" value="P:proteolysis"/>
    <property type="evidence" value="ECO:0007669"/>
    <property type="project" value="UniProtKB-KW"/>
</dbReference>
<dbReference type="GO" id="GO:0033146">
    <property type="term" value="P:regulation of intracellular estrogen receptor signaling pathway"/>
    <property type="evidence" value="ECO:0000250"/>
    <property type="project" value="UniProtKB"/>
</dbReference>
<dbReference type="GO" id="GO:0032649">
    <property type="term" value="P:regulation of type II interferon production"/>
    <property type="evidence" value="ECO:0000315"/>
    <property type="project" value="UniProtKB"/>
</dbReference>
<dbReference type="GO" id="GO:0072344">
    <property type="term" value="P:rescue of stalled ribosome"/>
    <property type="evidence" value="ECO:0007669"/>
    <property type="project" value="Ensembl"/>
</dbReference>
<dbReference type="GO" id="GO:0032790">
    <property type="term" value="P:ribosome disassembly"/>
    <property type="evidence" value="ECO:0000250"/>
    <property type="project" value="UniProtKB"/>
</dbReference>
<dbReference type="FunFam" id="3.90.70.130:FF:000001">
    <property type="entry name" value="Probable Ufm1-specific protease 2"/>
    <property type="match status" value="1"/>
</dbReference>
<dbReference type="Gene3D" id="3.90.70.130">
    <property type="match status" value="1"/>
</dbReference>
<dbReference type="InterPro" id="IPR012462">
    <property type="entry name" value="UfSP1/2_DUB_cat"/>
</dbReference>
<dbReference type="InterPro" id="IPR049387">
    <property type="entry name" value="UfSP2-like_N"/>
</dbReference>
<dbReference type="PANTHER" id="PTHR48153">
    <property type="entry name" value="UFM1-SPECIFIC PROTEASE 2"/>
    <property type="match status" value="1"/>
</dbReference>
<dbReference type="PANTHER" id="PTHR48153:SF2">
    <property type="entry name" value="UFM1-SPECIFIC PROTEASE 2"/>
    <property type="match status" value="1"/>
</dbReference>
<dbReference type="Pfam" id="PF07910">
    <property type="entry name" value="Peptidase_C78"/>
    <property type="match status" value="1"/>
</dbReference>
<dbReference type="Pfam" id="PF20908">
    <property type="entry name" value="UfSP2_N"/>
    <property type="match status" value="1"/>
</dbReference>
<protein>
    <recommendedName>
        <fullName evidence="6">Ufm1-specific protease 2</fullName>
        <shortName evidence="6">UfSP2</shortName>
        <ecNumber evidence="3">3.4.22.-</ecNumber>
    </recommendedName>
</protein>
<name>UFSP2_MOUSE</name>
<comment type="function">
    <text evidence="1 2 3 4">Thiol-dependent isopeptidase that specifically cleaves UFM1, a ubiquitin-like modifier protein, from conjugated proteins, such as CD274/PD-L1, CYB5R3, DDRGK1, MRE11, RPL26/uL24, TRIP4 and RPL26/uL24 (PubMed:17182609, PubMed:21228277, PubMed:33372156). While it is also able to mediate the processing of UFM1 precursors, a prerequisite for conjugation reactions, UFSP2 mainly acts as a protein deUFMylase that mediates deconjugation of UFM1 from target proteins (PubMed:17182609, PubMed:21228277). Mediates deUFMylation of RPL26/uL24, a critical step to release the UFM1 ribosome E3 ligase (UREL) complex during the recycling of 60S ribosome subunits from the endoplasmic reticulum (By similarity). Catalyzes deUFMylation of TRIP4, regulating intracellular nuclear receptors transactivation and thereby regulate cell proliferation and differentiation (By similarity).</text>
</comment>
<comment type="subcellular location">
    <subcellularLocation>
        <location evidence="3">Endoplasmic reticulum</location>
    </subcellularLocation>
    <subcellularLocation>
        <location evidence="3">Cytoplasm</location>
    </subcellularLocation>
    <subcellularLocation>
        <location evidence="3">Nucleus</location>
    </subcellularLocation>
</comment>
<comment type="tissue specificity">
    <text evidence="2 5">Expressed at high level in brain, kidney, stomach, skeletal muscle, liver, pancreas, spleen and testis.</text>
</comment>
<comment type="similarity">
    <text evidence="7">Belongs to the peptidase C78 family.</text>
</comment>
<comment type="sequence caution" evidence="7">
    <conflict type="erroneous termination">
        <sequence resource="EMBL-CDS" id="BAC37214"/>
    </conflict>
    <text>Truncated C-terminus.</text>
</comment>
<organism>
    <name type="scientific">Mus musculus</name>
    <name type="common">Mouse</name>
    <dbReference type="NCBI Taxonomy" id="10090"/>
    <lineage>
        <taxon>Eukaryota</taxon>
        <taxon>Metazoa</taxon>
        <taxon>Chordata</taxon>
        <taxon>Craniata</taxon>
        <taxon>Vertebrata</taxon>
        <taxon>Euteleostomi</taxon>
        <taxon>Mammalia</taxon>
        <taxon>Eutheria</taxon>
        <taxon>Euarchontoglires</taxon>
        <taxon>Glires</taxon>
        <taxon>Rodentia</taxon>
        <taxon>Myomorpha</taxon>
        <taxon>Muroidea</taxon>
        <taxon>Muridae</taxon>
        <taxon>Murinae</taxon>
        <taxon>Mus</taxon>
        <taxon>Mus</taxon>
    </lineage>
</organism>
<evidence type="ECO:0000250" key="1">
    <source>
        <dbReference type="UniProtKB" id="Q9NUQ7"/>
    </source>
</evidence>
<evidence type="ECO:0000269" key="2">
    <source>
    </source>
</evidence>
<evidence type="ECO:0000269" key="3">
    <source>
    </source>
</evidence>
<evidence type="ECO:0000269" key="4">
    <source>
    </source>
</evidence>
<evidence type="ECO:0000269" key="5">
    <source>
    </source>
</evidence>
<evidence type="ECO:0000303" key="6">
    <source>
    </source>
</evidence>
<evidence type="ECO:0000305" key="7"/>
<evidence type="ECO:0000312" key="8">
    <source>
        <dbReference type="MGI" id="MGI:1913679"/>
    </source>
</evidence>
<evidence type="ECO:0007829" key="9">
    <source>
        <dbReference type="PDB" id="3OQC"/>
    </source>
</evidence>
<reference key="1">
    <citation type="journal article" date="2005" name="Science">
        <title>The transcriptional landscape of the mammalian genome.</title>
        <authorList>
            <person name="Carninci P."/>
            <person name="Kasukawa T."/>
            <person name="Katayama S."/>
            <person name="Gough J."/>
            <person name="Frith M.C."/>
            <person name="Maeda N."/>
            <person name="Oyama R."/>
            <person name="Ravasi T."/>
            <person name="Lenhard B."/>
            <person name="Wells C."/>
            <person name="Kodzius R."/>
            <person name="Shimokawa K."/>
            <person name="Bajic V.B."/>
            <person name="Brenner S.E."/>
            <person name="Batalov S."/>
            <person name="Forrest A.R."/>
            <person name="Zavolan M."/>
            <person name="Davis M.J."/>
            <person name="Wilming L.G."/>
            <person name="Aidinis V."/>
            <person name="Allen J.E."/>
            <person name="Ambesi-Impiombato A."/>
            <person name="Apweiler R."/>
            <person name="Aturaliya R.N."/>
            <person name="Bailey T.L."/>
            <person name="Bansal M."/>
            <person name="Baxter L."/>
            <person name="Beisel K.W."/>
            <person name="Bersano T."/>
            <person name="Bono H."/>
            <person name="Chalk A.M."/>
            <person name="Chiu K.P."/>
            <person name="Choudhary V."/>
            <person name="Christoffels A."/>
            <person name="Clutterbuck D.R."/>
            <person name="Crowe M.L."/>
            <person name="Dalla E."/>
            <person name="Dalrymple B.P."/>
            <person name="de Bono B."/>
            <person name="Della Gatta G."/>
            <person name="di Bernardo D."/>
            <person name="Down T."/>
            <person name="Engstrom P."/>
            <person name="Fagiolini M."/>
            <person name="Faulkner G."/>
            <person name="Fletcher C.F."/>
            <person name="Fukushima T."/>
            <person name="Furuno M."/>
            <person name="Futaki S."/>
            <person name="Gariboldi M."/>
            <person name="Georgii-Hemming P."/>
            <person name="Gingeras T.R."/>
            <person name="Gojobori T."/>
            <person name="Green R.E."/>
            <person name="Gustincich S."/>
            <person name="Harbers M."/>
            <person name="Hayashi Y."/>
            <person name="Hensch T.K."/>
            <person name="Hirokawa N."/>
            <person name="Hill D."/>
            <person name="Huminiecki L."/>
            <person name="Iacono M."/>
            <person name="Ikeo K."/>
            <person name="Iwama A."/>
            <person name="Ishikawa T."/>
            <person name="Jakt M."/>
            <person name="Kanapin A."/>
            <person name="Katoh M."/>
            <person name="Kawasawa Y."/>
            <person name="Kelso J."/>
            <person name="Kitamura H."/>
            <person name="Kitano H."/>
            <person name="Kollias G."/>
            <person name="Krishnan S.P."/>
            <person name="Kruger A."/>
            <person name="Kummerfeld S.K."/>
            <person name="Kurochkin I.V."/>
            <person name="Lareau L.F."/>
            <person name="Lazarevic D."/>
            <person name="Lipovich L."/>
            <person name="Liu J."/>
            <person name="Liuni S."/>
            <person name="McWilliam S."/>
            <person name="Madan Babu M."/>
            <person name="Madera M."/>
            <person name="Marchionni L."/>
            <person name="Matsuda H."/>
            <person name="Matsuzawa S."/>
            <person name="Miki H."/>
            <person name="Mignone F."/>
            <person name="Miyake S."/>
            <person name="Morris K."/>
            <person name="Mottagui-Tabar S."/>
            <person name="Mulder N."/>
            <person name="Nakano N."/>
            <person name="Nakauchi H."/>
            <person name="Ng P."/>
            <person name="Nilsson R."/>
            <person name="Nishiguchi S."/>
            <person name="Nishikawa S."/>
            <person name="Nori F."/>
            <person name="Ohara O."/>
            <person name="Okazaki Y."/>
            <person name="Orlando V."/>
            <person name="Pang K.C."/>
            <person name="Pavan W.J."/>
            <person name="Pavesi G."/>
            <person name="Pesole G."/>
            <person name="Petrovsky N."/>
            <person name="Piazza S."/>
            <person name="Reed J."/>
            <person name="Reid J.F."/>
            <person name="Ring B.Z."/>
            <person name="Ringwald M."/>
            <person name="Rost B."/>
            <person name="Ruan Y."/>
            <person name="Salzberg S.L."/>
            <person name="Sandelin A."/>
            <person name="Schneider C."/>
            <person name="Schoenbach C."/>
            <person name="Sekiguchi K."/>
            <person name="Semple C.A."/>
            <person name="Seno S."/>
            <person name="Sessa L."/>
            <person name="Sheng Y."/>
            <person name="Shibata Y."/>
            <person name="Shimada H."/>
            <person name="Shimada K."/>
            <person name="Silva D."/>
            <person name="Sinclair B."/>
            <person name="Sperling S."/>
            <person name="Stupka E."/>
            <person name="Sugiura K."/>
            <person name="Sultana R."/>
            <person name="Takenaka Y."/>
            <person name="Taki K."/>
            <person name="Tammoja K."/>
            <person name="Tan S.L."/>
            <person name="Tang S."/>
            <person name="Taylor M.S."/>
            <person name="Tegner J."/>
            <person name="Teichmann S.A."/>
            <person name="Ueda H.R."/>
            <person name="van Nimwegen E."/>
            <person name="Verardo R."/>
            <person name="Wei C.L."/>
            <person name="Yagi K."/>
            <person name="Yamanishi H."/>
            <person name="Zabarovsky E."/>
            <person name="Zhu S."/>
            <person name="Zimmer A."/>
            <person name="Hide W."/>
            <person name="Bult C."/>
            <person name="Grimmond S.M."/>
            <person name="Teasdale R.D."/>
            <person name="Liu E.T."/>
            <person name="Brusic V."/>
            <person name="Quackenbush J."/>
            <person name="Wahlestedt C."/>
            <person name="Mattick J.S."/>
            <person name="Hume D.A."/>
            <person name="Kai C."/>
            <person name="Sasaki D."/>
            <person name="Tomaru Y."/>
            <person name="Fukuda S."/>
            <person name="Kanamori-Katayama M."/>
            <person name="Suzuki M."/>
            <person name="Aoki J."/>
            <person name="Arakawa T."/>
            <person name="Iida J."/>
            <person name="Imamura K."/>
            <person name="Itoh M."/>
            <person name="Kato T."/>
            <person name="Kawaji H."/>
            <person name="Kawagashira N."/>
            <person name="Kawashima T."/>
            <person name="Kojima M."/>
            <person name="Kondo S."/>
            <person name="Konno H."/>
            <person name="Nakano K."/>
            <person name="Ninomiya N."/>
            <person name="Nishio T."/>
            <person name="Okada M."/>
            <person name="Plessy C."/>
            <person name="Shibata K."/>
            <person name="Shiraki T."/>
            <person name="Suzuki S."/>
            <person name="Tagami M."/>
            <person name="Waki K."/>
            <person name="Watahiki A."/>
            <person name="Okamura-Oho Y."/>
            <person name="Suzuki H."/>
            <person name="Kawai J."/>
            <person name="Hayashizaki Y."/>
        </authorList>
    </citation>
    <scope>NUCLEOTIDE SEQUENCE [LARGE SCALE MRNA]</scope>
    <source>
        <strain>C57BL/6J</strain>
        <tissue>Olfactory bulb</tissue>
        <tissue>Pancreas</tissue>
    </source>
</reference>
<reference key="2">
    <citation type="journal article" date="2004" name="Genome Res.">
        <title>The status, quality, and expansion of the NIH full-length cDNA project: the Mammalian Gene Collection (MGC).</title>
        <authorList>
            <consortium name="The MGC Project Team"/>
        </authorList>
    </citation>
    <scope>NUCLEOTIDE SEQUENCE [LARGE SCALE MRNA]</scope>
    <source>
        <strain>FVB/N</strain>
        <tissue>Mammary tumor</tissue>
    </source>
</reference>
<reference key="3">
    <citation type="journal article" date="2007" name="J. Biol. Chem.">
        <title>Two novel ubiquitin-fold modifier 1 (Ufm1)-specific Proteases, UfSP1 and UfSP2.</title>
        <authorList>
            <person name="Kang S.H."/>
            <person name="Kim G.R."/>
            <person name="Seong M."/>
            <person name="Baek S.H."/>
            <person name="Seol J.H."/>
            <person name="Bang O.S."/>
            <person name="Ovaa H."/>
            <person name="Tatsumi K."/>
            <person name="Komatsu M."/>
            <person name="Tanaka K."/>
            <person name="Chung C.H."/>
        </authorList>
    </citation>
    <scope>FUNCTION</scope>
    <scope>TISSUE SPECIFICITY</scope>
    <scope>MUTAGENESIS OF CYS-294</scope>
</reference>
<reference key="4">
    <citation type="journal article" date="2010" name="Cell">
        <title>A tissue-specific atlas of mouse protein phosphorylation and expression.</title>
        <authorList>
            <person name="Huttlin E.L."/>
            <person name="Jedrychowski M.P."/>
            <person name="Elias J.E."/>
            <person name="Goswami T."/>
            <person name="Rad R."/>
            <person name="Beausoleil S.A."/>
            <person name="Villen J."/>
            <person name="Haas W."/>
            <person name="Sowa M.E."/>
            <person name="Gygi S.P."/>
        </authorList>
    </citation>
    <scope>IDENTIFICATION BY MASS SPECTROMETRY [LARGE SCALE ANALYSIS]</scope>
    <source>
        <tissue>Heart</tissue>
        <tissue>Kidney</tissue>
        <tissue>Pancreas</tissue>
        <tissue>Spleen</tissue>
        <tissue>Testis</tissue>
    </source>
</reference>
<reference key="5">
    <citation type="journal article" date="2021" name="Genet. Med.">
        <title>A pathogenic UFSP2 variant in an autosomal recessive form of pediatric neurodevelopmental anomalies and epilepsy.</title>
        <authorList>
            <person name="Ni M."/>
            <person name="Afroze B."/>
            <person name="Xing C."/>
            <person name="Pan C."/>
            <person name="Shao Y."/>
            <person name="Cai L."/>
            <person name="Cantarel B.L."/>
            <person name="Pei J."/>
            <person name="Grishin N.V."/>
            <person name="Hewson S."/>
            <person name="Knight D."/>
            <person name="Mahida S."/>
            <person name="Michel D."/>
            <person name="Tarnopolsky M."/>
            <person name="Poduri A."/>
            <person name="Rotenberg A."/>
            <person name="Sondheimer N."/>
            <person name="DeBerardinis R.J."/>
        </authorList>
    </citation>
    <scope>TISSUE SPECIFICITY</scope>
</reference>
<reference key="6">
    <citation type="journal article" date="2021" name="Proc. Natl. Acad. Sci. U.S.A.">
        <title>UFMylation inhibits the proinflammatory capacity of interferon-gamma-activated macrophages.</title>
        <authorList>
            <person name="Balce D.R."/>
            <person name="Wang Y.T."/>
            <person name="McAllaster M.R."/>
            <person name="Dunlap B.F."/>
            <person name="Orvedahl A."/>
            <person name="Hykes B.L. Jr."/>
            <person name="Droit L."/>
            <person name="Handley S.A."/>
            <person name="Wilen C.B."/>
            <person name="Doench J.G."/>
            <person name="Orchard R.C."/>
            <person name="Stallings C.L."/>
            <person name="Virgin H.W."/>
        </authorList>
    </citation>
    <scope>FUNCTION</scope>
    <scope>MUTAGENESIS OF CYS-294</scope>
</reference>
<reference key="7">
    <citation type="journal article" date="2011" name="J. Biol. Chem.">
        <title>Structure of Ubiquitin-fold modifier 1 specific protease, UfSP2.</title>
        <authorList>
            <person name="Ha B.H."/>
            <person name="Jeon Y.J."/>
            <person name="Shin S.C."/>
            <person name="Tatsumi K."/>
            <person name="Komatsu M."/>
            <person name="Tanaka K."/>
            <person name="Watson C.M."/>
            <person name="Wallis G."/>
            <person name="Chung C.H."/>
            <person name="Kim E.E."/>
        </authorList>
    </citation>
    <scope>X-RAY CRYSTALLOGRAPHY (2.6 ANGSTROMS) OF MUTANT ARG-94/ALA-128/SER-294</scope>
    <scope>FUNCTION</scope>
    <scope>SUBCELLULAR LOCATION</scope>
    <scope>CATALYTIC ACTIVITY</scope>
    <scope>MUTAGENESIS OF TYR-282; CYS-294; HIS-398; ASP-418 AND HIS-420</scope>
    <scope>ACTIVE SITE</scope>
</reference>
<accession>Q99K23</accession>
<accession>Q8C5I0</accession>
<proteinExistence type="evidence at protein level"/>
<feature type="chain" id="PRO_0000280363" description="Ufm1-specific protease 2">
    <location>
        <begin position="1"/>
        <end position="461"/>
    </location>
</feature>
<feature type="active site" evidence="3">
    <location>
        <position position="294"/>
    </location>
</feature>
<feature type="active site" evidence="3">
    <location>
        <position position="418"/>
    </location>
</feature>
<feature type="active site" evidence="3">
    <location>
        <position position="420"/>
    </location>
</feature>
<feature type="mutagenesis site" description="Loss of enzyme activity." evidence="3">
    <original>Y</original>
    <variation>H</variation>
    <location>
        <position position="282"/>
    </location>
</feature>
<feature type="mutagenesis site" description="Loss of enzyme activity." evidence="2 3 4">
    <original>C</original>
    <variation>S</variation>
    <location>
        <position position="294"/>
    </location>
</feature>
<feature type="mutagenesis site" description="No effect on enzyme activity." evidence="3">
    <original>H</original>
    <variation>A</variation>
    <location>
        <position position="398"/>
    </location>
</feature>
<feature type="mutagenesis site" description="Reduced enzyme activity." evidence="3">
    <original>D</original>
    <variation>A</variation>
    <location>
        <position position="418"/>
    </location>
</feature>
<feature type="mutagenesis site" description="Loss of enzyme activity." evidence="3">
    <original>H</original>
    <variation>A</variation>
    <location>
        <position position="420"/>
    </location>
</feature>
<feature type="strand" evidence="9">
    <location>
        <begin position="3"/>
        <end position="16"/>
    </location>
</feature>
<feature type="helix" evidence="9">
    <location>
        <begin position="21"/>
        <end position="41"/>
    </location>
</feature>
<feature type="strand" evidence="9">
    <location>
        <begin position="45"/>
        <end position="50"/>
    </location>
</feature>
<feature type="helix" evidence="9">
    <location>
        <begin position="73"/>
        <end position="78"/>
    </location>
</feature>
<feature type="strand" evidence="9">
    <location>
        <begin position="105"/>
        <end position="113"/>
    </location>
</feature>
<feature type="strand" evidence="9">
    <location>
        <begin position="135"/>
        <end position="148"/>
    </location>
</feature>
<feature type="helix" evidence="9">
    <location>
        <begin position="157"/>
        <end position="179"/>
    </location>
</feature>
<feature type="strand" evidence="9">
    <location>
        <begin position="188"/>
        <end position="193"/>
    </location>
</feature>
<feature type="strand" evidence="9">
    <location>
        <begin position="202"/>
        <end position="207"/>
    </location>
</feature>
<feature type="helix" evidence="9">
    <location>
        <begin position="212"/>
        <end position="214"/>
    </location>
</feature>
<feature type="helix" evidence="9">
    <location>
        <begin position="216"/>
        <end position="225"/>
    </location>
</feature>
<feature type="strand" evidence="9">
    <location>
        <begin position="234"/>
        <end position="236"/>
    </location>
</feature>
<feature type="helix" evidence="9">
    <location>
        <begin position="237"/>
        <end position="239"/>
    </location>
</feature>
<feature type="helix" evidence="9">
    <location>
        <begin position="257"/>
        <end position="259"/>
    </location>
</feature>
<feature type="strand" evidence="9">
    <location>
        <begin position="269"/>
        <end position="272"/>
    </location>
</feature>
<feature type="turn" evidence="9">
    <location>
        <begin position="290"/>
        <end position="292"/>
    </location>
</feature>
<feature type="helix" evidence="9">
    <location>
        <begin position="294"/>
        <end position="308"/>
    </location>
</feature>
<feature type="helix" evidence="9">
    <location>
        <begin position="319"/>
        <end position="329"/>
    </location>
</feature>
<feature type="helix" evidence="9">
    <location>
        <begin position="334"/>
        <end position="336"/>
    </location>
</feature>
<feature type="helix" evidence="9">
    <location>
        <begin position="345"/>
        <end position="356"/>
    </location>
</feature>
<feature type="strand" evidence="9">
    <location>
        <begin position="360"/>
        <end position="365"/>
    </location>
</feature>
<feature type="helix" evidence="9">
    <location>
        <begin position="368"/>
        <end position="374"/>
    </location>
</feature>
<feature type="helix" evidence="9">
    <location>
        <begin position="375"/>
        <end position="382"/>
    </location>
</feature>
<feature type="turn" evidence="9">
    <location>
        <begin position="383"/>
        <end position="385"/>
    </location>
</feature>
<feature type="strand" evidence="9">
    <location>
        <begin position="389"/>
        <end position="393"/>
    </location>
</feature>
<feature type="strand" evidence="9">
    <location>
        <begin position="396"/>
        <end position="405"/>
    </location>
</feature>
<feature type="turn" evidence="9">
    <location>
        <begin position="407"/>
        <end position="409"/>
    </location>
</feature>
<feature type="strand" evidence="9">
    <location>
        <begin position="412"/>
        <end position="417"/>
    </location>
</feature>
<feature type="helix" evidence="9">
    <location>
        <begin position="427"/>
        <end position="432"/>
    </location>
</feature>
<feature type="strand" evidence="9">
    <location>
        <begin position="435"/>
        <end position="439"/>
    </location>
</feature>
<feature type="strand" evidence="9">
    <location>
        <begin position="446"/>
        <end position="448"/>
    </location>
</feature>
<feature type="strand" evidence="9">
    <location>
        <begin position="450"/>
        <end position="455"/>
    </location>
</feature>
<keyword id="KW-0002">3D-structure</keyword>
<keyword id="KW-0963">Cytoplasm</keyword>
<keyword id="KW-0256">Endoplasmic reticulum</keyword>
<keyword id="KW-0378">Hydrolase</keyword>
<keyword id="KW-0539">Nucleus</keyword>
<keyword id="KW-0645">Protease</keyword>
<keyword id="KW-1185">Reference proteome</keyword>
<keyword id="KW-0788">Thiol protease</keyword>
<keyword id="KW-0833">Ubl conjugation pathway</keyword>
<gene>
    <name evidence="6 8" type="primary">Ufsp2</name>
</gene>
<sequence>MDILFRIRGGFDLAFQLAPPKEMFIKNALRQVLSDLTTKLSSDALVLRVCNSSVYLWPNSDANTGELTDSSACKNVVRFIQFDQEEDTKRKFIKKKDKKLTDTQQIVNIDLMLEISTPLGAVTPILERENEEHHYINMSLPIDAVVSVAPEESWGKVRKLLVDAILRQLVDVEKCILRYMKGTSIVVPEPLHFQLPGKKNLVTVLYPSGIPDDQLQAYRKELHDLFNLPHDRPYFKRINAYHFPDELYKDGYIRNPHTYLSPPNIEGSMICVVQGTYAYHHYMQDRIDDNGWGCAYRSLQTICSWFRHQGYTERSIPTHREIQQALVDAGDKPATFVGSRQWIGSIEVQMVLNQLIGVTSKILFVNQGSEMASQGRELANHFQNVGTPVMVGGGVLAHTILGVAWNETTGQIKFLILDPHYTGAEDLQVMLEKGWCGWKSPDFWNKDAYYNLCLPQRPNAL</sequence>